<organism>
    <name type="scientific">Syntrophomonas wolfei subsp. wolfei (strain DSM 2245B / Goettingen)</name>
    <dbReference type="NCBI Taxonomy" id="335541"/>
    <lineage>
        <taxon>Bacteria</taxon>
        <taxon>Bacillati</taxon>
        <taxon>Bacillota</taxon>
        <taxon>Clostridia</taxon>
        <taxon>Eubacteriales</taxon>
        <taxon>Syntrophomonadaceae</taxon>
        <taxon>Syntrophomonas</taxon>
    </lineage>
</organism>
<accession>Q0AX38</accession>
<sequence>MKTDVEIAQSAKMQPITEIADRIGIEPNELELYGSYKAKISLDIMKRIEDKPQGKLVLVTAISPTPAGEGKTTTTIGLGQALNKIGKKAIVALREPSLGPVFGIKGGATGGGYAQVVPMEDINLHFTGDIHAVTTAHNLLAALMDNHLHQGNELDIDSRQIVWRRVMDLNERVLRNIVLGLGGRINGVPRESGFDISVASEVMAALCLATDLMDLKERFAKIVVAYSQQGQAITAGDLKAAGSMALLMKDAIKPNLVQTLENTPAFIHGGPFANIAHGANSIVATRLGVKLADYMVTEAGFGADLGAEKFFNIVCRYGKLVPDAVVLVASIRALKHHGGVKKDKLGEENLEALAQGMENLKKHLENIQKFGVPAVVALNEFPSDTSKEIDYVFSQCAAMQTAVSISRVWAQGGEGGIDLAEKLVLATEQGSQFKFLYELNQPLKNKIETICREIYGAGSVKYAAEAKRMLQKYEESGFGDLPVCIAKTQYSLSDNAQLLGRPTGFEVNIRQVKLSAGAGFVVALAGDIMTMPGLGKVPAAENIDIKPDGEIVGLF</sequence>
<feature type="chain" id="PRO_0000300551" description="Formate--tetrahydrofolate ligase">
    <location>
        <begin position="1"/>
        <end position="555"/>
    </location>
</feature>
<feature type="binding site" evidence="1">
    <location>
        <begin position="65"/>
        <end position="72"/>
    </location>
    <ligand>
        <name>ATP</name>
        <dbReference type="ChEBI" id="CHEBI:30616"/>
    </ligand>
</feature>
<gene>
    <name evidence="1" type="primary">fhs</name>
    <name type="ordered locus">Swol_1409</name>
</gene>
<comment type="catalytic activity">
    <reaction evidence="1">
        <text>(6S)-5,6,7,8-tetrahydrofolate + formate + ATP = (6R)-10-formyltetrahydrofolate + ADP + phosphate</text>
        <dbReference type="Rhea" id="RHEA:20221"/>
        <dbReference type="ChEBI" id="CHEBI:15740"/>
        <dbReference type="ChEBI" id="CHEBI:30616"/>
        <dbReference type="ChEBI" id="CHEBI:43474"/>
        <dbReference type="ChEBI" id="CHEBI:57453"/>
        <dbReference type="ChEBI" id="CHEBI:195366"/>
        <dbReference type="ChEBI" id="CHEBI:456216"/>
        <dbReference type="EC" id="6.3.4.3"/>
    </reaction>
</comment>
<comment type="pathway">
    <text evidence="1">One-carbon metabolism; tetrahydrofolate interconversion.</text>
</comment>
<comment type="similarity">
    <text evidence="1">Belongs to the formate--tetrahydrofolate ligase family.</text>
</comment>
<protein>
    <recommendedName>
        <fullName evidence="1">Formate--tetrahydrofolate ligase</fullName>
        <ecNumber evidence="1">6.3.4.3</ecNumber>
    </recommendedName>
    <alternativeName>
        <fullName evidence="1">Formyltetrahydrofolate synthetase</fullName>
        <shortName evidence="1">FHS</shortName>
        <shortName evidence="1">FTHFS</shortName>
    </alternativeName>
</protein>
<keyword id="KW-0067">ATP-binding</keyword>
<keyword id="KW-0436">Ligase</keyword>
<keyword id="KW-0547">Nucleotide-binding</keyword>
<keyword id="KW-0554">One-carbon metabolism</keyword>
<keyword id="KW-1185">Reference proteome</keyword>
<proteinExistence type="inferred from homology"/>
<reference key="1">
    <citation type="journal article" date="2010" name="Environ. Microbiol.">
        <title>The genome of Syntrophomonas wolfei: new insights into syntrophic metabolism and biohydrogen production.</title>
        <authorList>
            <person name="Sieber J.R."/>
            <person name="Sims D.R."/>
            <person name="Han C."/>
            <person name="Kim E."/>
            <person name="Lykidis A."/>
            <person name="Lapidus A.L."/>
            <person name="McDonnald E."/>
            <person name="Rohlin L."/>
            <person name="Culley D.E."/>
            <person name="Gunsalus R."/>
            <person name="McInerney M.J."/>
        </authorList>
    </citation>
    <scope>NUCLEOTIDE SEQUENCE [LARGE SCALE GENOMIC DNA]</scope>
    <source>
        <strain>DSM 2245B / Goettingen</strain>
    </source>
</reference>
<evidence type="ECO:0000255" key="1">
    <source>
        <dbReference type="HAMAP-Rule" id="MF_01543"/>
    </source>
</evidence>
<dbReference type="EC" id="6.3.4.3" evidence="1"/>
<dbReference type="EMBL" id="CP000448">
    <property type="protein sequence ID" value="ABI68716.1"/>
    <property type="molecule type" value="Genomic_DNA"/>
</dbReference>
<dbReference type="RefSeq" id="WP_011640815.1">
    <property type="nucleotide sequence ID" value="NC_008346.1"/>
</dbReference>
<dbReference type="SMR" id="Q0AX38"/>
<dbReference type="STRING" id="335541.Swol_1409"/>
<dbReference type="KEGG" id="swo:Swol_1409"/>
<dbReference type="eggNOG" id="COG2759">
    <property type="taxonomic scope" value="Bacteria"/>
</dbReference>
<dbReference type="HOGENOM" id="CLU_003601_3_3_9"/>
<dbReference type="OrthoDB" id="9761733at2"/>
<dbReference type="UniPathway" id="UPA00193"/>
<dbReference type="Proteomes" id="UP000001968">
    <property type="component" value="Chromosome"/>
</dbReference>
<dbReference type="GO" id="GO:0005524">
    <property type="term" value="F:ATP binding"/>
    <property type="evidence" value="ECO:0007669"/>
    <property type="project" value="UniProtKB-UniRule"/>
</dbReference>
<dbReference type="GO" id="GO:0004329">
    <property type="term" value="F:formate-tetrahydrofolate ligase activity"/>
    <property type="evidence" value="ECO:0007669"/>
    <property type="project" value="UniProtKB-UniRule"/>
</dbReference>
<dbReference type="GO" id="GO:0035999">
    <property type="term" value="P:tetrahydrofolate interconversion"/>
    <property type="evidence" value="ECO:0007669"/>
    <property type="project" value="UniProtKB-UniRule"/>
</dbReference>
<dbReference type="CDD" id="cd00477">
    <property type="entry name" value="FTHFS"/>
    <property type="match status" value="1"/>
</dbReference>
<dbReference type="FunFam" id="3.30.1510.10:FF:000001">
    <property type="entry name" value="Formate--tetrahydrofolate ligase"/>
    <property type="match status" value="1"/>
</dbReference>
<dbReference type="FunFam" id="3.10.410.10:FF:000001">
    <property type="entry name" value="Putative formate--tetrahydrofolate ligase"/>
    <property type="match status" value="1"/>
</dbReference>
<dbReference type="Gene3D" id="3.30.1510.10">
    <property type="entry name" value="Domain 2, N(10)-formyltetrahydrofolate synthetase"/>
    <property type="match status" value="1"/>
</dbReference>
<dbReference type="Gene3D" id="3.10.410.10">
    <property type="entry name" value="Formyltetrahydrofolate synthetase, domain 3"/>
    <property type="match status" value="1"/>
</dbReference>
<dbReference type="Gene3D" id="3.40.50.300">
    <property type="entry name" value="P-loop containing nucleotide triphosphate hydrolases"/>
    <property type="match status" value="1"/>
</dbReference>
<dbReference type="HAMAP" id="MF_01543">
    <property type="entry name" value="FTHFS"/>
    <property type="match status" value="1"/>
</dbReference>
<dbReference type="InterPro" id="IPR000559">
    <property type="entry name" value="Formate_THF_ligase"/>
</dbReference>
<dbReference type="InterPro" id="IPR020628">
    <property type="entry name" value="Formate_THF_ligase_CS"/>
</dbReference>
<dbReference type="InterPro" id="IPR027417">
    <property type="entry name" value="P-loop_NTPase"/>
</dbReference>
<dbReference type="NCBIfam" id="NF010030">
    <property type="entry name" value="PRK13505.1"/>
    <property type="match status" value="1"/>
</dbReference>
<dbReference type="Pfam" id="PF01268">
    <property type="entry name" value="FTHFS"/>
    <property type="match status" value="1"/>
</dbReference>
<dbReference type="SUPFAM" id="SSF52540">
    <property type="entry name" value="P-loop containing nucleoside triphosphate hydrolases"/>
    <property type="match status" value="1"/>
</dbReference>
<dbReference type="PROSITE" id="PS00721">
    <property type="entry name" value="FTHFS_1"/>
    <property type="match status" value="1"/>
</dbReference>
<dbReference type="PROSITE" id="PS00722">
    <property type="entry name" value="FTHFS_2"/>
    <property type="match status" value="1"/>
</dbReference>
<name>FTHS_SYNWW</name>